<proteinExistence type="evidence at protein level"/>
<feature type="chain" id="PRO_0000155175" description="Phosphate-specific transport system accessory protein PhoU homolog">
    <location>
        <begin position="1"/>
        <end position="242"/>
    </location>
</feature>
<feature type="helix" evidence="4">
    <location>
        <begin position="15"/>
        <end position="45"/>
    </location>
</feature>
<feature type="helix" evidence="4">
    <location>
        <begin position="49"/>
        <end position="56"/>
    </location>
</feature>
<feature type="helix" evidence="4">
    <location>
        <begin position="59"/>
        <end position="78"/>
    </location>
</feature>
<feature type="helix" evidence="4">
    <location>
        <begin position="84"/>
        <end position="120"/>
    </location>
</feature>
<feature type="helix" evidence="4">
    <location>
        <begin position="127"/>
        <end position="149"/>
    </location>
</feature>
<feature type="helix" evidence="4">
    <location>
        <begin position="153"/>
        <end position="183"/>
    </location>
</feature>
<feature type="helix" evidence="4">
    <location>
        <begin position="185"/>
        <end position="187"/>
    </location>
</feature>
<feature type="helix" evidence="4">
    <location>
        <begin position="188"/>
        <end position="220"/>
    </location>
</feature>
<keyword id="KW-0002">3D-structure</keyword>
<keyword id="KW-0145">Chemotaxis</keyword>
<keyword id="KW-0963">Cytoplasm</keyword>
<keyword id="KW-0592">Phosphate transport</keyword>
<keyword id="KW-1185">Reference proteome</keyword>
<keyword id="KW-0813">Transport</keyword>
<protein>
    <recommendedName>
        <fullName>Phosphate-specific transport system accessory protein PhoU homolog</fullName>
        <shortName>Pst system accessory protein PhoU homolog</shortName>
    </recommendedName>
</protein>
<gene>
    <name type="primary">phoU</name>
    <name type="ordered locus">PA5365</name>
</gene>
<dbReference type="EMBL" id="D45195">
    <property type="protein sequence ID" value="BAA08138.1"/>
    <property type="molecule type" value="Genomic_DNA"/>
</dbReference>
<dbReference type="EMBL" id="D28587">
    <property type="status" value="NOT_ANNOTATED_CDS"/>
    <property type="molecule type" value="Genomic_DNA"/>
</dbReference>
<dbReference type="EMBL" id="AE004091">
    <property type="protein sequence ID" value="AAG08750.1"/>
    <property type="molecule type" value="Genomic_DNA"/>
</dbReference>
<dbReference type="PIR" id="S68596">
    <property type="entry name" value="S65576"/>
</dbReference>
<dbReference type="RefSeq" id="NP_254052.1">
    <property type="nucleotide sequence ID" value="NC_002516.2"/>
</dbReference>
<dbReference type="RefSeq" id="WP_003096661.1">
    <property type="nucleotide sequence ID" value="NZ_QZGE01000020.1"/>
</dbReference>
<dbReference type="PDB" id="4Q25">
    <property type="method" value="X-ray"/>
    <property type="resolution" value="2.28 A"/>
    <property type="chains" value="A/B=1-242"/>
</dbReference>
<dbReference type="PDBsum" id="4Q25"/>
<dbReference type="SMR" id="Q51547"/>
<dbReference type="FunCoup" id="Q51547">
    <property type="interactions" value="488"/>
</dbReference>
<dbReference type="STRING" id="208964.PA5365"/>
<dbReference type="PaxDb" id="208964-PA5365"/>
<dbReference type="GeneID" id="881627"/>
<dbReference type="KEGG" id="pae:PA5365"/>
<dbReference type="PATRIC" id="fig|208964.12.peg.5622"/>
<dbReference type="PseudoCAP" id="PA5365"/>
<dbReference type="HOGENOM" id="CLU_078518_2_1_6"/>
<dbReference type="InParanoid" id="Q51547"/>
<dbReference type="OrthoDB" id="9814256at2"/>
<dbReference type="PhylomeDB" id="Q51547"/>
<dbReference type="BioCyc" id="PAER208964:G1FZ6-5487-MONOMER"/>
<dbReference type="Proteomes" id="UP000002438">
    <property type="component" value="Chromosome"/>
</dbReference>
<dbReference type="GO" id="GO:0005737">
    <property type="term" value="C:cytoplasm"/>
    <property type="evidence" value="ECO:0000250"/>
    <property type="project" value="UniProtKB"/>
</dbReference>
<dbReference type="GO" id="GO:0042803">
    <property type="term" value="F:protein homodimerization activity"/>
    <property type="evidence" value="ECO:0000250"/>
    <property type="project" value="UniProtKB"/>
</dbReference>
<dbReference type="GO" id="GO:0060326">
    <property type="term" value="P:cell chemotaxis"/>
    <property type="evidence" value="ECO:0000315"/>
    <property type="project" value="UniProtKB"/>
</dbReference>
<dbReference type="GO" id="GO:0030643">
    <property type="term" value="P:intracellular phosphate ion homeostasis"/>
    <property type="evidence" value="ECO:0007669"/>
    <property type="project" value="InterPro"/>
</dbReference>
<dbReference type="GO" id="GO:0050922">
    <property type="term" value="P:negative regulation of chemotaxis"/>
    <property type="evidence" value="ECO:0000315"/>
    <property type="project" value="PseudoCAP"/>
</dbReference>
<dbReference type="GO" id="GO:0045936">
    <property type="term" value="P:negative regulation of phosphate metabolic process"/>
    <property type="evidence" value="ECO:0000250"/>
    <property type="project" value="UniProtKB"/>
</dbReference>
<dbReference type="GO" id="GO:2000186">
    <property type="term" value="P:negative regulation of phosphate transmembrane transport"/>
    <property type="evidence" value="ECO:0000250"/>
    <property type="project" value="UniProtKB"/>
</dbReference>
<dbReference type="GO" id="GO:0050928">
    <property type="term" value="P:negative regulation of positive chemotaxis"/>
    <property type="evidence" value="ECO:0000315"/>
    <property type="project" value="PseudoCAP"/>
</dbReference>
<dbReference type="GO" id="GO:0006817">
    <property type="term" value="P:phosphate ion transport"/>
    <property type="evidence" value="ECO:0007669"/>
    <property type="project" value="UniProtKB-KW"/>
</dbReference>
<dbReference type="FunFam" id="1.20.58.220:FF:000001">
    <property type="entry name" value="Phosphate-specific transport system accessory protein PhoU"/>
    <property type="match status" value="1"/>
</dbReference>
<dbReference type="FunFam" id="1.20.58.220:FF:000002">
    <property type="entry name" value="Phosphate-specific transport system accessory protein PhoU"/>
    <property type="match status" value="1"/>
</dbReference>
<dbReference type="Gene3D" id="1.20.58.220">
    <property type="entry name" value="Phosphate transport system protein phou homolog 2, domain 2"/>
    <property type="match status" value="2"/>
</dbReference>
<dbReference type="InterPro" id="IPR028366">
    <property type="entry name" value="P_transport_PhoU"/>
</dbReference>
<dbReference type="InterPro" id="IPR038078">
    <property type="entry name" value="PhoU-like_sf"/>
</dbReference>
<dbReference type="InterPro" id="IPR026022">
    <property type="entry name" value="PhoU_dom"/>
</dbReference>
<dbReference type="NCBIfam" id="TIGR02135">
    <property type="entry name" value="phoU_full"/>
    <property type="match status" value="1"/>
</dbReference>
<dbReference type="PANTHER" id="PTHR42930">
    <property type="entry name" value="PHOSPHATE-SPECIFIC TRANSPORT SYSTEM ACCESSORY PROTEIN PHOU"/>
    <property type="match status" value="1"/>
</dbReference>
<dbReference type="PANTHER" id="PTHR42930:SF3">
    <property type="entry name" value="PHOSPHATE-SPECIFIC TRANSPORT SYSTEM ACCESSORY PROTEIN PHOU"/>
    <property type="match status" value="1"/>
</dbReference>
<dbReference type="Pfam" id="PF01895">
    <property type="entry name" value="PhoU"/>
    <property type="match status" value="2"/>
</dbReference>
<dbReference type="PIRSF" id="PIRSF003107">
    <property type="entry name" value="PhoU"/>
    <property type="match status" value="1"/>
</dbReference>
<dbReference type="SUPFAM" id="SSF109755">
    <property type="entry name" value="PhoU-like"/>
    <property type="match status" value="1"/>
</dbReference>
<sequence length="242" mass="27487">MINKDSLTHHISQQFNAELEDVRSHLLAMGGLVEKQVNDAVNALIDADSGLAQQVREIDDQINQMERNIDEECVRILARRQPAASDLRLIISISKSVIDLERIGDEASKVARRAIQLCEEGESPRGYVEVRHIGSQVQKMVQEALDAFARFDADLALSVAQYDKTVDREYKTALRELVTYMMEDPRAISRVLNIIWALRSLERIGDHARNIAELVIYLVRGTDVRHIGLTRMKEEVENNRGE</sequence>
<name>PHOU_PSEAE</name>
<accession>Q51547</accession>
<comment type="function">
    <text evidence="1">Plays a role in the regulation of phosphate uptake.</text>
</comment>
<comment type="subunit">
    <text evidence="1">Homodimer.</text>
</comment>
<comment type="subcellular location">
    <subcellularLocation>
        <location evidence="1">Cytoplasm</location>
    </subcellularLocation>
</comment>
<comment type="disruption phenotype">
    <text evidence="2">Mutants are constitutive of alkaline phosphatase and show chemotactic response to phosphate regardless of wheather the cells are starved for phosphate.</text>
</comment>
<comment type="similarity">
    <text evidence="3">Belongs to the PhoU family.</text>
</comment>
<organism>
    <name type="scientific">Pseudomonas aeruginosa (strain ATCC 15692 / DSM 22644 / CIP 104116 / JCM 14847 / LMG 12228 / 1C / PRS 101 / PAO1)</name>
    <dbReference type="NCBI Taxonomy" id="208964"/>
    <lineage>
        <taxon>Bacteria</taxon>
        <taxon>Pseudomonadati</taxon>
        <taxon>Pseudomonadota</taxon>
        <taxon>Gammaproteobacteria</taxon>
        <taxon>Pseudomonadales</taxon>
        <taxon>Pseudomonadaceae</taxon>
        <taxon>Pseudomonas</taxon>
    </lineage>
</organism>
<evidence type="ECO:0000250" key="1"/>
<evidence type="ECO:0000269" key="2">
    <source>
    </source>
</evidence>
<evidence type="ECO:0000305" key="3"/>
<evidence type="ECO:0007829" key="4">
    <source>
        <dbReference type="PDB" id="4Q25"/>
    </source>
</evidence>
<reference key="1">
    <citation type="journal article" date="1996" name="Mol. Gen. Genet.">
        <title>Molecular analysis of the phosphate-specific transport (pst) operon of Pseudomonas aeruginosa.</title>
        <authorList>
            <person name="Nikata T."/>
            <person name="Sakai Y."/>
            <person name="Shibata K."/>
            <person name="Kato J."/>
            <person name="Kuroda A."/>
            <person name="Ohtake H."/>
        </authorList>
    </citation>
    <scope>NUCLEOTIDE SEQUENCE [GENOMIC DNA]</scope>
    <source>
        <strain>ATCC 15692 / DSM 22644 / CIP 104116 / JCM 14847 / LMG 12228 / 1C / PRS 101 / PAO1</strain>
    </source>
</reference>
<reference key="2">
    <citation type="journal article" date="1994" name="J. Bacteriol.">
        <title>Cloning and characterization of a Pseudomonas aeruginosa gene involved in the negative regulation of phosphate taxis.</title>
        <authorList>
            <person name="Kato J."/>
            <person name="Sakai Y."/>
            <person name="Nikata T."/>
            <person name="Ohtake H."/>
        </authorList>
    </citation>
    <scope>NUCLEOTIDE SEQUENCE [GENOMIC DNA]</scope>
    <scope>DISRUPTION PHENOTYPE</scope>
    <source>
        <strain>ATCC 15692 / DSM 22644 / CIP 104116 / JCM 14847 / LMG 12228 / 1C / PRS 101 / PAO1</strain>
    </source>
</reference>
<reference key="3">
    <citation type="journal article" date="2000" name="Nature">
        <title>Complete genome sequence of Pseudomonas aeruginosa PAO1, an opportunistic pathogen.</title>
        <authorList>
            <person name="Stover C.K."/>
            <person name="Pham X.-Q.T."/>
            <person name="Erwin A.L."/>
            <person name="Mizoguchi S.D."/>
            <person name="Warrener P."/>
            <person name="Hickey M.J."/>
            <person name="Brinkman F.S.L."/>
            <person name="Hufnagle W.O."/>
            <person name="Kowalik D.J."/>
            <person name="Lagrou M."/>
            <person name="Garber R.L."/>
            <person name="Goltry L."/>
            <person name="Tolentino E."/>
            <person name="Westbrock-Wadman S."/>
            <person name="Yuan Y."/>
            <person name="Brody L.L."/>
            <person name="Coulter S.N."/>
            <person name="Folger K.R."/>
            <person name="Kas A."/>
            <person name="Larbig K."/>
            <person name="Lim R.M."/>
            <person name="Smith K.A."/>
            <person name="Spencer D.H."/>
            <person name="Wong G.K.-S."/>
            <person name="Wu Z."/>
            <person name="Paulsen I.T."/>
            <person name="Reizer J."/>
            <person name="Saier M.H. Jr."/>
            <person name="Hancock R.E.W."/>
            <person name="Lory S."/>
            <person name="Olson M.V."/>
        </authorList>
    </citation>
    <scope>NUCLEOTIDE SEQUENCE [LARGE SCALE GENOMIC DNA]</scope>
    <source>
        <strain>ATCC 15692 / DSM 22644 / CIP 104116 / JCM 14847 / LMG 12228 / 1C / PRS 101 / PAO1</strain>
    </source>
</reference>